<keyword id="KW-0002">3D-structure</keyword>
<keyword id="KW-0067">ATP-binding</keyword>
<keyword id="KW-0547">Nucleotide-binding</keyword>
<keyword id="KW-0548">Nucleotidyltransferase</keyword>
<keyword id="KW-1185">Reference proteome</keyword>
<keyword id="KW-0808">Transferase</keyword>
<reference key="1">
    <citation type="journal article" date="1989" name="J. Bacteriol.">
        <title>Nucleotide sequences of fic and fic-1 genes involved in cell filamentation induced by cyclic AMP in Escherichia coli.</title>
        <authorList>
            <person name="Kawamukai M."/>
            <person name="Matsuda H."/>
            <person name="Fujii W."/>
            <person name="Utsumi R."/>
            <person name="Komano T."/>
        </authorList>
    </citation>
    <scope>NUCLEOTIDE SEQUENCE [GENOMIC DNA]</scope>
    <scope>MUTAGENESIS OF GLY-55</scope>
</reference>
<reference key="2">
    <citation type="journal article" date="1990" name="J. Bacteriol.">
        <title>Chromosomal organization and expression of Escherichia coli pabA.</title>
        <authorList>
            <person name="Tran P.V."/>
            <person name="Bannor T.A."/>
            <person name="Doktor S.Z."/>
            <person name="Nichols B.P."/>
        </authorList>
    </citation>
    <scope>NUCLEOTIDE SEQUENCE [GENOMIC DNA]</scope>
</reference>
<reference key="3">
    <citation type="journal article" date="1997" name="Science">
        <title>The complete genome sequence of Escherichia coli K-12.</title>
        <authorList>
            <person name="Blattner F.R."/>
            <person name="Plunkett G. III"/>
            <person name="Bloch C.A."/>
            <person name="Perna N.T."/>
            <person name="Burland V."/>
            <person name="Riley M."/>
            <person name="Collado-Vides J."/>
            <person name="Glasner J.D."/>
            <person name="Rode C.K."/>
            <person name="Mayhew G.F."/>
            <person name="Gregor J."/>
            <person name="Davis N.W."/>
            <person name="Kirkpatrick H.A."/>
            <person name="Goeden M.A."/>
            <person name="Rose D.J."/>
            <person name="Mau B."/>
            <person name="Shao Y."/>
        </authorList>
    </citation>
    <scope>NUCLEOTIDE SEQUENCE [LARGE SCALE GENOMIC DNA]</scope>
    <source>
        <strain>K12 / MG1655 / ATCC 47076</strain>
    </source>
</reference>
<reference key="4">
    <citation type="journal article" date="2006" name="Mol. Syst. Biol.">
        <title>Highly accurate genome sequences of Escherichia coli K-12 strains MG1655 and W3110.</title>
        <authorList>
            <person name="Hayashi K."/>
            <person name="Morooka N."/>
            <person name="Yamamoto Y."/>
            <person name="Fujita K."/>
            <person name="Isono K."/>
            <person name="Choi S."/>
            <person name="Ohtsubo E."/>
            <person name="Baba T."/>
            <person name="Wanner B.L."/>
            <person name="Mori H."/>
            <person name="Horiuchi T."/>
        </authorList>
    </citation>
    <scope>NUCLEOTIDE SEQUENCE [LARGE SCALE GENOMIC DNA]</scope>
    <source>
        <strain>K12 / W3110 / ATCC 27325 / DSM 5911</strain>
    </source>
</reference>
<reference key="5">
    <citation type="journal article" date="1995" name="Biosci. Biotechnol. Biochem.">
        <title>Mutational analysis of the fic promoter recognized by RpoS (sigma 38) in Escherichia coli.</title>
        <authorList>
            <person name="Utsumi R."/>
            <person name="Nakayama T."/>
            <person name="Iwamoto N."/>
            <person name="Kohda K."/>
            <person name="Kawamukai M."/>
            <person name="Tanabe H."/>
            <person name="Tanaka K."/>
            <person name="Takahashi H."/>
            <person name="Noda M."/>
        </authorList>
    </citation>
    <scope>NUCLEOTIDE SEQUENCE [GENOMIC DNA] OF 1-18</scope>
</reference>
<reference key="6">
    <citation type="journal article" date="1991" name="Biochemistry">
        <title>Two distinct forms of peptidylprolyl-cis-trans-isomerase are expressed separately in periplasmic and cytoplasmic compartments of Escherichia coli cells.</title>
        <authorList>
            <person name="Hayano T."/>
            <person name="Takahashi N."/>
            <person name="Kato S."/>
            <person name="Maki N."/>
            <person name="Suzuki M."/>
        </authorList>
    </citation>
    <scope>NUCLEOTIDE SEQUENCE [GENOMIC DNA] OF 1-14</scope>
</reference>
<comment type="function">
    <text evidence="1">Probable adenylyltransferase that mediates the addition of adenosine 5'-monophosphate (AMP) to specific residues of target proteins (By similarity). Involved in cell filamentation induced by cyclic AMP. May have some role in cell division.</text>
</comment>
<comment type="catalytic activity">
    <reaction>
        <text>L-tyrosyl-[protein] + ATP = O-(5'-adenylyl)-L-tyrosyl-[protein] + diphosphate</text>
        <dbReference type="Rhea" id="RHEA:54288"/>
        <dbReference type="Rhea" id="RHEA-COMP:10136"/>
        <dbReference type="Rhea" id="RHEA-COMP:13846"/>
        <dbReference type="ChEBI" id="CHEBI:30616"/>
        <dbReference type="ChEBI" id="CHEBI:33019"/>
        <dbReference type="ChEBI" id="CHEBI:46858"/>
        <dbReference type="ChEBI" id="CHEBI:83624"/>
        <dbReference type="EC" id="2.7.7.108"/>
    </reaction>
</comment>
<comment type="catalytic activity">
    <reaction>
        <text>L-threonyl-[protein] + ATP = 3-O-(5'-adenylyl)-L-threonyl-[protein] + diphosphate</text>
        <dbReference type="Rhea" id="RHEA:54292"/>
        <dbReference type="Rhea" id="RHEA-COMP:11060"/>
        <dbReference type="Rhea" id="RHEA-COMP:13847"/>
        <dbReference type="ChEBI" id="CHEBI:30013"/>
        <dbReference type="ChEBI" id="CHEBI:30616"/>
        <dbReference type="ChEBI" id="CHEBI:33019"/>
        <dbReference type="ChEBI" id="CHEBI:138113"/>
        <dbReference type="EC" id="2.7.7.108"/>
    </reaction>
</comment>
<comment type="interaction">
    <interactant intactId="EBI-1132602">
        <id>P20605</id>
    </interactant>
    <interactant intactId="EBI-549140">
        <id>P06710</id>
        <label>dnaX</label>
    </interactant>
    <organismsDiffer>false</organismsDiffer>
    <experiments>2</experiments>
</comment>
<comment type="similarity">
    <text evidence="4">Belongs to the fic family.</text>
</comment>
<organism>
    <name type="scientific">Escherichia coli (strain K12)</name>
    <dbReference type="NCBI Taxonomy" id="83333"/>
    <lineage>
        <taxon>Bacteria</taxon>
        <taxon>Pseudomonadati</taxon>
        <taxon>Pseudomonadota</taxon>
        <taxon>Gammaproteobacteria</taxon>
        <taxon>Enterobacterales</taxon>
        <taxon>Enterobacteriaceae</taxon>
        <taxon>Escherichia</taxon>
    </lineage>
</organism>
<protein>
    <recommendedName>
        <fullName>Probable protein adenylyltransferase Fic</fullName>
        <ecNumber>2.7.7.108</ecNumber>
    </recommendedName>
    <alternativeName>
        <fullName>Cell filamentation protein Fic</fullName>
    </alternativeName>
</protein>
<evidence type="ECO:0000250" key="1"/>
<evidence type="ECO:0000255" key="2">
    <source>
        <dbReference type="PROSITE-ProRule" id="PRU00791"/>
    </source>
</evidence>
<evidence type="ECO:0000269" key="3">
    <source>
    </source>
</evidence>
<evidence type="ECO:0000305" key="4"/>
<evidence type="ECO:0007829" key="5">
    <source>
        <dbReference type="PDB" id="5JFF"/>
    </source>
</evidence>
<evidence type="ECO:0007829" key="6">
    <source>
        <dbReference type="PDB" id="5JFZ"/>
    </source>
</evidence>
<proteinExistence type="evidence at protein level"/>
<dbReference type="EC" id="2.7.7.108"/>
<dbReference type="EMBL" id="M28363">
    <property type="protein sequence ID" value="AAA23773.1"/>
    <property type="molecule type" value="Genomic_DNA"/>
</dbReference>
<dbReference type="EMBL" id="M32354">
    <property type="protein sequence ID" value="AAA24263.1"/>
    <property type="molecule type" value="Genomic_DNA"/>
</dbReference>
<dbReference type="EMBL" id="U18997">
    <property type="protein sequence ID" value="AAA58158.1"/>
    <property type="molecule type" value="Genomic_DNA"/>
</dbReference>
<dbReference type="EMBL" id="U00096">
    <property type="protein sequence ID" value="AAC76386.1"/>
    <property type="molecule type" value="Genomic_DNA"/>
</dbReference>
<dbReference type="EMBL" id="AP009048">
    <property type="protein sequence ID" value="BAE77929.1"/>
    <property type="molecule type" value="Genomic_DNA"/>
</dbReference>
<dbReference type="EMBL" id="S79599">
    <property type="protein sequence ID" value="AAB35351.1"/>
    <property type="molecule type" value="Genomic_DNA"/>
</dbReference>
<dbReference type="EMBL" id="M55429">
    <property type="protein sequence ID" value="AAA23452.1"/>
    <property type="molecule type" value="Genomic_DNA"/>
</dbReference>
<dbReference type="PIR" id="D65130">
    <property type="entry name" value="D65130"/>
</dbReference>
<dbReference type="RefSeq" id="NP_417820.1">
    <property type="nucleotide sequence ID" value="NC_000913.3"/>
</dbReference>
<dbReference type="RefSeq" id="WP_001280641.1">
    <property type="nucleotide sequence ID" value="NZ_SSZK01000008.1"/>
</dbReference>
<dbReference type="PDB" id="5JFF">
    <property type="method" value="X-ray"/>
    <property type="resolution" value="2.00 A"/>
    <property type="chains" value="A/C=1-200"/>
</dbReference>
<dbReference type="PDB" id="5JFZ">
    <property type="method" value="X-ray"/>
    <property type="resolution" value="2.40 A"/>
    <property type="chains" value="A/C/E=3-200"/>
</dbReference>
<dbReference type="PDBsum" id="5JFF"/>
<dbReference type="PDBsum" id="5JFZ"/>
<dbReference type="SMR" id="P20605"/>
<dbReference type="BioGRID" id="4261083">
    <property type="interactions" value="87"/>
</dbReference>
<dbReference type="BioGRID" id="852183">
    <property type="interactions" value="5"/>
</dbReference>
<dbReference type="DIP" id="DIP-9608N"/>
<dbReference type="FunCoup" id="P20605">
    <property type="interactions" value="34"/>
</dbReference>
<dbReference type="IntAct" id="P20605">
    <property type="interactions" value="5"/>
</dbReference>
<dbReference type="STRING" id="511145.b3361"/>
<dbReference type="jPOST" id="P20605"/>
<dbReference type="PaxDb" id="511145-b3361"/>
<dbReference type="EnsemblBacteria" id="AAC76386">
    <property type="protein sequence ID" value="AAC76386"/>
    <property type="gene ID" value="b3361"/>
</dbReference>
<dbReference type="GeneID" id="947872"/>
<dbReference type="KEGG" id="ecj:JW3324"/>
<dbReference type="KEGG" id="eco:b3361"/>
<dbReference type="KEGG" id="ecoc:C3026_18255"/>
<dbReference type="PATRIC" id="fig|1411691.4.peg.3369"/>
<dbReference type="EchoBASE" id="EB0303"/>
<dbReference type="eggNOG" id="COG2184">
    <property type="taxonomic scope" value="Bacteria"/>
</dbReference>
<dbReference type="HOGENOM" id="CLU_080158_0_2_6"/>
<dbReference type="InParanoid" id="P20605"/>
<dbReference type="OMA" id="DPYCYPG"/>
<dbReference type="OrthoDB" id="9807853at2"/>
<dbReference type="PhylomeDB" id="P20605"/>
<dbReference type="BioCyc" id="EcoCyc:EG10307-MONOMER"/>
<dbReference type="PRO" id="PR:P20605"/>
<dbReference type="Proteomes" id="UP000000625">
    <property type="component" value="Chromosome"/>
</dbReference>
<dbReference type="GO" id="GO:0070733">
    <property type="term" value="F:AMPylase activity"/>
    <property type="evidence" value="ECO:0007669"/>
    <property type="project" value="RHEA"/>
</dbReference>
<dbReference type="GO" id="GO:0005524">
    <property type="term" value="F:ATP binding"/>
    <property type="evidence" value="ECO:0007669"/>
    <property type="project" value="UniProtKB-KW"/>
</dbReference>
<dbReference type="GO" id="GO:0051302">
    <property type="term" value="P:regulation of cell division"/>
    <property type="evidence" value="ECO:0000315"/>
    <property type="project" value="EcoCyc"/>
</dbReference>
<dbReference type="Gene3D" id="1.10.3290.10">
    <property type="entry name" value="Fido-like domain"/>
    <property type="match status" value="1"/>
</dbReference>
<dbReference type="InterPro" id="IPR003812">
    <property type="entry name" value="Fido"/>
</dbReference>
<dbReference type="InterPro" id="IPR036597">
    <property type="entry name" value="Fido-like_dom_sf"/>
</dbReference>
<dbReference type="NCBIfam" id="NF007672">
    <property type="entry name" value="PRK10347.1"/>
    <property type="match status" value="1"/>
</dbReference>
<dbReference type="PANTHER" id="PTHR39560">
    <property type="entry name" value="PROTEIN ADENYLYLTRANSFERASE FIC-RELATED"/>
    <property type="match status" value="1"/>
</dbReference>
<dbReference type="PANTHER" id="PTHR39560:SF1">
    <property type="entry name" value="PROTEIN ADENYLYLTRANSFERASE FIC-RELATED"/>
    <property type="match status" value="1"/>
</dbReference>
<dbReference type="Pfam" id="PF02661">
    <property type="entry name" value="Fic"/>
    <property type="match status" value="1"/>
</dbReference>
<dbReference type="SUPFAM" id="SSF140931">
    <property type="entry name" value="Fic-like"/>
    <property type="match status" value="1"/>
</dbReference>
<dbReference type="PROSITE" id="PS51459">
    <property type="entry name" value="FIDO"/>
    <property type="match status" value="1"/>
</dbReference>
<name>FIC_ECOLI</name>
<sequence length="200" mass="22960">MSDKFGEGRDPYLYPGLDIMRNRLNIRQQQRLEQAAYEMTALRAATIELGPLVRGLPHLRTIHRQLYQDIFDWAGQLREVDIYQGDTPFCHFAYIEKEGNALMQDLEEEGYLVGLEKAKFVERLAHYYCEINVLHPFRVGSGLAQRIFFEQLAIHAGYQLSWQGIEKEAWNQANQSGAMGDLTALQMIFSKVVSEAGESE</sequence>
<gene>
    <name type="primary">fic</name>
    <name type="ordered locus">b3361</name>
    <name type="ordered locus">JW3324</name>
</gene>
<accession>P20605</accession>
<accession>Q2M727</accession>
<feature type="chain" id="PRO_0000087240" description="Probable protein adenylyltransferase Fic">
    <location>
        <begin position="1"/>
        <end position="200"/>
    </location>
</feature>
<feature type="domain" description="Fido" evidence="2">
    <location>
        <begin position="54"/>
        <end position="195"/>
    </location>
</feature>
<feature type="binding site" evidence="1">
    <location>
        <begin position="84"/>
        <end position="85"/>
    </location>
    <ligand>
        <name>ATP</name>
        <dbReference type="ChEBI" id="CHEBI:30616"/>
    </ligand>
</feature>
<feature type="binding site" evidence="1">
    <location>
        <begin position="140"/>
        <end position="142"/>
    </location>
    <ligand>
        <name>ATP</name>
        <dbReference type="ChEBI" id="CHEBI:30616"/>
    </ligand>
</feature>
<feature type="binding site" evidence="1">
    <location>
        <position position="146"/>
    </location>
    <ligand>
        <name>ATP</name>
        <dbReference type="ChEBI" id="CHEBI:30616"/>
    </ligand>
</feature>
<feature type="binding site" evidence="1">
    <location>
        <position position="172"/>
    </location>
    <ligand>
        <name>ATP</name>
        <dbReference type="ChEBI" id="CHEBI:30616"/>
    </ligand>
</feature>
<feature type="mutagenesis site" description="Inhibitory effect on cell division induced by cAMP with temperature sensitivity." evidence="3">
    <original>G</original>
    <variation>R</variation>
    <location>
        <position position="55"/>
    </location>
</feature>
<feature type="sequence conflict" description="In Ref. 1; AAA23773." evidence="4" ref="1">
    <original>VR</original>
    <variation>GA</variation>
    <location>
        <begin position="53"/>
        <end position="54"/>
    </location>
</feature>
<feature type="sequence conflict" description="In Ref. 2; AAA24263." evidence="4" ref="2">
    <location>
        <position position="149"/>
    </location>
</feature>
<feature type="strand" evidence="6">
    <location>
        <begin position="17"/>
        <end position="20"/>
    </location>
</feature>
<feature type="helix" evidence="5">
    <location>
        <begin position="29"/>
        <end position="44"/>
    </location>
</feature>
<feature type="helix" evidence="5">
    <location>
        <begin position="56"/>
        <end position="67"/>
    </location>
</feature>
<feature type="turn" evidence="5">
    <location>
        <begin position="68"/>
        <end position="70"/>
    </location>
</feature>
<feature type="turn" evidence="5">
    <location>
        <begin position="72"/>
        <end position="75"/>
    </location>
</feature>
<feature type="helix" evidence="5">
    <location>
        <begin position="92"/>
        <end position="94"/>
    </location>
</feature>
<feature type="helix" evidence="5">
    <location>
        <begin position="95"/>
        <end position="108"/>
    </location>
</feature>
<feature type="helix" evidence="5">
    <location>
        <begin position="110"/>
        <end position="112"/>
    </location>
</feature>
<feature type="helix" evidence="5">
    <location>
        <begin position="117"/>
        <end position="134"/>
    </location>
</feature>
<feature type="strand" evidence="5">
    <location>
        <begin position="137"/>
        <end position="139"/>
    </location>
</feature>
<feature type="helix" evidence="5">
    <location>
        <begin position="141"/>
        <end position="155"/>
    </location>
</feature>
<feature type="strand" evidence="5">
    <location>
        <begin position="158"/>
        <end position="160"/>
    </location>
</feature>
<feature type="helix" evidence="5">
    <location>
        <begin position="167"/>
        <end position="178"/>
    </location>
</feature>
<feature type="helix" evidence="5">
    <location>
        <begin position="183"/>
        <end position="192"/>
    </location>
</feature>
<feature type="strand" evidence="5">
    <location>
        <begin position="193"/>
        <end position="195"/>
    </location>
</feature>